<sequence>MNALPRVGIGTDVHPIEEGKPCWLLGLLFSDENGCEGHSDGDVAAHALCDALLSAAGLGDVGAVFGTGRPEWTGVSGAKMLSHVRDLLHDNGFQIGNAAVQVIGNRPKVGPRRAEAQELLSGLIGAPVSVSATTTDGLGLTGRGEGLAAVATALVTAL</sequence>
<proteinExistence type="inferred from homology"/>
<comment type="function">
    <text evidence="1">Involved in the biosynthesis of isopentenyl diphosphate (IPP) and dimethylallyl diphosphate (DMAPP), two major building blocks of isoprenoid compounds. Catalyzes the conversion of 4-diphosphocytidyl-2-C-methyl-D-erythritol 2-phosphate (CDP-ME2P) to 2-C-methyl-D-erythritol 2,4-cyclodiphosphate (ME-CPP) with a corresponding release of cytidine 5-monophosphate (CMP).</text>
</comment>
<comment type="catalytic activity">
    <reaction evidence="1">
        <text>4-CDP-2-C-methyl-D-erythritol 2-phosphate = 2-C-methyl-D-erythritol 2,4-cyclic diphosphate + CMP</text>
        <dbReference type="Rhea" id="RHEA:23864"/>
        <dbReference type="ChEBI" id="CHEBI:57919"/>
        <dbReference type="ChEBI" id="CHEBI:58483"/>
        <dbReference type="ChEBI" id="CHEBI:60377"/>
        <dbReference type="EC" id="4.6.1.12"/>
    </reaction>
</comment>
<comment type="cofactor">
    <cofactor evidence="1">
        <name>a divalent metal cation</name>
        <dbReference type="ChEBI" id="CHEBI:60240"/>
    </cofactor>
    <text evidence="1">Binds 1 divalent metal cation per subunit.</text>
</comment>
<comment type="pathway">
    <text evidence="1">Isoprenoid biosynthesis; isopentenyl diphosphate biosynthesis via DXP pathway; isopentenyl diphosphate from 1-deoxy-D-xylulose 5-phosphate: step 4/6.</text>
</comment>
<comment type="subunit">
    <text evidence="1">Homotrimer.</text>
</comment>
<comment type="similarity">
    <text evidence="1">Belongs to the IspF family.</text>
</comment>
<evidence type="ECO:0000255" key="1">
    <source>
        <dbReference type="HAMAP-Rule" id="MF_00107"/>
    </source>
</evidence>
<protein>
    <recommendedName>
        <fullName evidence="1">2-C-methyl-D-erythritol 2,4-cyclodiphosphate synthase</fullName>
        <shortName evidence="1">MECDP-synthase</shortName>
        <shortName evidence="1">MECPP-synthase</shortName>
        <shortName evidence="1">MECPS</shortName>
        <ecNumber evidence="1">4.6.1.12</ecNumber>
    </recommendedName>
</protein>
<organism>
    <name type="scientific">Mycobacteroides abscessus (strain ATCC 19977 / DSM 44196 / CCUG 20993 / CIP 104536 / JCM 13569 / NCTC 13031 / TMC 1543 / L948)</name>
    <name type="common">Mycobacterium abscessus</name>
    <dbReference type="NCBI Taxonomy" id="561007"/>
    <lineage>
        <taxon>Bacteria</taxon>
        <taxon>Bacillati</taxon>
        <taxon>Actinomycetota</taxon>
        <taxon>Actinomycetes</taxon>
        <taxon>Mycobacteriales</taxon>
        <taxon>Mycobacteriaceae</taxon>
        <taxon>Mycobacteroides</taxon>
        <taxon>Mycobacteroides abscessus</taxon>
    </lineage>
</organism>
<keyword id="KW-0414">Isoprene biosynthesis</keyword>
<keyword id="KW-0456">Lyase</keyword>
<keyword id="KW-0479">Metal-binding</keyword>
<keyword id="KW-1185">Reference proteome</keyword>
<gene>
    <name evidence="1" type="primary">ispF</name>
    <name type="ordered locus">MAB_0570</name>
</gene>
<reference key="1">
    <citation type="journal article" date="2009" name="PLoS ONE">
        <title>Non mycobacterial virulence genes in the genome of the emerging pathogen Mycobacterium abscessus.</title>
        <authorList>
            <person name="Ripoll F."/>
            <person name="Pasek S."/>
            <person name="Schenowitz C."/>
            <person name="Dossat C."/>
            <person name="Barbe V."/>
            <person name="Rottman M."/>
            <person name="Macheras E."/>
            <person name="Heym B."/>
            <person name="Herrmann J.L."/>
            <person name="Daffe M."/>
            <person name="Brosch R."/>
            <person name="Risler J.L."/>
            <person name="Gaillard J.L."/>
        </authorList>
    </citation>
    <scope>NUCLEOTIDE SEQUENCE [LARGE SCALE GENOMIC DNA]</scope>
    <source>
        <strain>ATCC 19977 / DSM 44196 / CCUG 20993 / CIP 104536 / JCM 13569 / NCTC 13031 / TMC 1543 / L948</strain>
    </source>
</reference>
<accession>B1MGY4</accession>
<feature type="chain" id="PRO_1000094272" description="2-C-methyl-D-erythritol 2,4-cyclodiphosphate synthase">
    <location>
        <begin position="1"/>
        <end position="158"/>
    </location>
</feature>
<feature type="binding site" evidence="1">
    <location>
        <begin position="12"/>
        <end position="14"/>
    </location>
    <ligand>
        <name>4-CDP-2-C-methyl-D-erythritol 2-phosphate</name>
        <dbReference type="ChEBI" id="CHEBI:57919"/>
    </ligand>
</feature>
<feature type="binding site" evidence="1">
    <location>
        <position position="12"/>
    </location>
    <ligand>
        <name>a divalent metal cation</name>
        <dbReference type="ChEBI" id="CHEBI:60240"/>
    </ligand>
</feature>
<feature type="binding site" evidence="1">
    <location>
        <position position="14"/>
    </location>
    <ligand>
        <name>a divalent metal cation</name>
        <dbReference type="ChEBI" id="CHEBI:60240"/>
    </ligand>
</feature>
<feature type="binding site" evidence="1">
    <location>
        <begin position="38"/>
        <end position="39"/>
    </location>
    <ligand>
        <name>4-CDP-2-C-methyl-D-erythritol 2-phosphate</name>
        <dbReference type="ChEBI" id="CHEBI:57919"/>
    </ligand>
</feature>
<feature type="binding site" evidence="1">
    <location>
        <position position="46"/>
    </location>
    <ligand>
        <name>a divalent metal cation</name>
        <dbReference type="ChEBI" id="CHEBI:60240"/>
    </ligand>
</feature>
<feature type="binding site" evidence="1">
    <location>
        <begin position="60"/>
        <end position="62"/>
    </location>
    <ligand>
        <name>4-CDP-2-C-methyl-D-erythritol 2-phosphate</name>
        <dbReference type="ChEBI" id="CHEBI:57919"/>
    </ligand>
</feature>
<feature type="binding site" evidence="1">
    <location>
        <begin position="133"/>
        <end position="136"/>
    </location>
    <ligand>
        <name>4-CDP-2-C-methyl-D-erythritol 2-phosphate</name>
        <dbReference type="ChEBI" id="CHEBI:57919"/>
    </ligand>
</feature>
<feature type="binding site" evidence="1">
    <location>
        <position position="143"/>
    </location>
    <ligand>
        <name>4-CDP-2-C-methyl-D-erythritol 2-phosphate</name>
        <dbReference type="ChEBI" id="CHEBI:57919"/>
    </ligand>
</feature>
<feature type="site" description="Transition state stabilizer" evidence="1">
    <location>
        <position position="38"/>
    </location>
</feature>
<feature type="site" description="Transition state stabilizer" evidence="1">
    <location>
        <position position="134"/>
    </location>
</feature>
<name>ISPF_MYCA9</name>
<dbReference type="EC" id="4.6.1.12" evidence="1"/>
<dbReference type="EMBL" id="CU458896">
    <property type="protein sequence ID" value="CAM60668.1"/>
    <property type="molecule type" value="Genomic_DNA"/>
</dbReference>
<dbReference type="RefSeq" id="WP_005064989.1">
    <property type="nucleotide sequence ID" value="NZ_MLCG01000008.1"/>
</dbReference>
<dbReference type="SMR" id="B1MGY4"/>
<dbReference type="GeneID" id="93377516"/>
<dbReference type="KEGG" id="mab:MAB_0570"/>
<dbReference type="UniPathway" id="UPA00056">
    <property type="reaction ID" value="UER00095"/>
</dbReference>
<dbReference type="Proteomes" id="UP000007137">
    <property type="component" value="Chromosome"/>
</dbReference>
<dbReference type="GO" id="GO:0008685">
    <property type="term" value="F:2-C-methyl-D-erythritol 2,4-cyclodiphosphate synthase activity"/>
    <property type="evidence" value="ECO:0007669"/>
    <property type="project" value="UniProtKB-UniRule"/>
</dbReference>
<dbReference type="GO" id="GO:0046872">
    <property type="term" value="F:metal ion binding"/>
    <property type="evidence" value="ECO:0007669"/>
    <property type="project" value="UniProtKB-KW"/>
</dbReference>
<dbReference type="GO" id="GO:0019288">
    <property type="term" value="P:isopentenyl diphosphate biosynthetic process, methylerythritol 4-phosphate pathway"/>
    <property type="evidence" value="ECO:0007669"/>
    <property type="project" value="UniProtKB-UniRule"/>
</dbReference>
<dbReference type="GO" id="GO:0016114">
    <property type="term" value="P:terpenoid biosynthetic process"/>
    <property type="evidence" value="ECO:0007669"/>
    <property type="project" value="InterPro"/>
</dbReference>
<dbReference type="CDD" id="cd00554">
    <property type="entry name" value="MECDP_synthase"/>
    <property type="match status" value="1"/>
</dbReference>
<dbReference type="FunFam" id="3.30.1330.50:FF:000003">
    <property type="entry name" value="2-C-methyl-D-erythritol 2,4-cyclodiphosphate synthase"/>
    <property type="match status" value="1"/>
</dbReference>
<dbReference type="Gene3D" id="3.30.1330.50">
    <property type="entry name" value="2-C-methyl-D-erythritol 2,4-cyclodiphosphate synthase"/>
    <property type="match status" value="1"/>
</dbReference>
<dbReference type="HAMAP" id="MF_00107">
    <property type="entry name" value="IspF"/>
    <property type="match status" value="1"/>
</dbReference>
<dbReference type="InterPro" id="IPR003526">
    <property type="entry name" value="MECDP_synthase"/>
</dbReference>
<dbReference type="InterPro" id="IPR020555">
    <property type="entry name" value="MECDP_synthase_CS"/>
</dbReference>
<dbReference type="InterPro" id="IPR036571">
    <property type="entry name" value="MECDP_synthase_sf"/>
</dbReference>
<dbReference type="NCBIfam" id="TIGR00151">
    <property type="entry name" value="ispF"/>
    <property type="match status" value="1"/>
</dbReference>
<dbReference type="PANTHER" id="PTHR43181">
    <property type="entry name" value="2-C-METHYL-D-ERYTHRITOL 2,4-CYCLODIPHOSPHATE SYNTHASE, CHLOROPLASTIC"/>
    <property type="match status" value="1"/>
</dbReference>
<dbReference type="PANTHER" id="PTHR43181:SF1">
    <property type="entry name" value="2-C-METHYL-D-ERYTHRITOL 2,4-CYCLODIPHOSPHATE SYNTHASE, CHLOROPLASTIC"/>
    <property type="match status" value="1"/>
</dbReference>
<dbReference type="Pfam" id="PF02542">
    <property type="entry name" value="YgbB"/>
    <property type="match status" value="1"/>
</dbReference>
<dbReference type="SUPFAM" id="SSF69765">
    <property type="entry name" value="IpsF-like"/>
    <property type="match status" value="1"/>
</dbReference>
<dbReference type="PROSITE" id="PS01350">
    <property type="entry name" value="ISPF"/>
    <property type="match status" value="1"/>
</dbReference>